<protein>
    <recommendedName>
        <fullName evidence="1">ATP-dependent helicase/deoxyribonuclease subunit B</fullName>
        <ecNumber evidence="1">3.1.-.-</ecNumber>
    </recommendedName>
    <alternativeName>
        <fullName evidence="1">ATP-dependent helicase/nuclease subunit RexB</fullName>
    </alternativeName>
</protein>
<organism>
    <name type="scientific">Streptococcus pyogenes serotype M12 (strain MGAS2096)</name>
    <dbReference type="NCBI Taxonomy" id="370553"/>
    <lineage>
        <taxon>Bacteria</taxon>
        <taxon>Bacillati</taxon>
        <taxon>Bacillota</taxon>
        <taxon>Bacilli</taxon>
        <taxon>Lactobacillales</taxon>
        <taxon>Streptococcaceae</taxon>
        <taxon>Streptococcus</taxon>
    </lineage>
</organism>
<accession>Q1JCJ9</accession>
<name>ADDB_STRPB</name>
<keyword id="KW-0067">ATP-binding</keyword>
<keyword id="KW-0227">DNA damage</keyword>
<keyword id="KW-0234">DNA repair</keyword>
<keyword id="KW-0238">DNA-binding</keyword>
<keyword id="KW-0269">Exonuclease</keyword>
<keyword id="KW-0347">Helicase</keyword>
<keyword id="KW-0378">Hydrolase</keyword>
<keyword id="KW-0540">Nuclease</keyword>
<keyword id="KW-0547">Nucleotide-binding</keyword>
<comment type="function">
    <text evidence="1">The heterodimer acts as both an ATP-dependent DNA helicase and an ATP-dependent, dual-direction single-stranded exonuclease. Recognizes the chi site generating a DNA molecule suitable for the initiation of homologous recombination. This subunit has 5' -&gt; 3' nuclease activity but not helicase activity.</text>
</comment>
<comment type="cofactor">
    <cofactor evidence="1">
        <name>Mg(2+)</name>
        <dbReference type="ChEBI" id="CHEBI:18420"/>
    </cofactor>
</comment>
<comment type="subunit">
    <text evidence="1">Heterodimer of AddA and RexB.</text>
</comment>
<comment type="miscellaneous">
    <text evidence="1">Despite having helicase-like domains, this subunit does not have helicase activity.</text>
</comment>
<comment type="similarity">
    <text evidence="1">Belongs to the helicase family. AddB/RexB type 2 subfamily.</text>
</comment>
<sequence>MKLIYTEMSYSMTEILVNEARKAADQGYRVFYIAPNSLSFEKEREVLTLLPERGTFSIIVTRFVQMSRYFTVESSPSKQHLDDTTLAMIFYRALMQLKPEDLPSYGRLQNNSVFIEQLVELYKELKNAQLSVHDLTGLDHPQKQEDLIKIIELAETIMIQQDYNQDSPLQSFARAIKLGLLNNQLSKTVIVIDGFSRFSAEEDYLLSLLNNNCQEVIIGSYVSQKAYQKSFIKGNIYEASLHFLQDLAQKYHIKPVFATSNQVFKPAFSRLTQLFEATHDFSQVDWQLQKNDLDHFSLWQCHHQKEEIEHVAKSIRQKLYEGYRYKDILVLLGDMDAYQLQIGPIFDKFEIPYYLGKAEPMAAHPLVQFIESLERSQRYNWRREDILNMLKSGLFGCFDDSDIDRFEEYTQFADIKGFTKFSKPFTINSSRQYPLDFLNEMRQDIVLPLQELFKSQKQLGASLIDKLILFLEKIRLAENMQGLAQSQLEVEKNEEVWKRFTDILTSFHHIFGQEKLRLSDCLALIKTGMKSAQYRVVPATLDVVTIKSYDLVQPHSKPFVYAIGLTQSHFPKQIHHSGLLSDQERARINEIRNYRHFDIASAENSKKNHQTALSLFNAATKELVLSVPTVINETFDDLSPYLKELINFGLPLLDKGKNYLSYDNSDIGNYKALLSQIIAINRQDLIEMSDQDKMFWTVVLRYLRKQLRKQQLELPTSDYRLSTKPLSKEVIEVCFPKGIPLKLSATALTVFYNNQYNYFLKYVLNLNKTESIHPDSRIHGQYLHRVFERLMKDHTQEPFDNKLKQAIYHTNQESFFQQVYQDNAEAEYSLAILEDIVRSTAPILQLNQNIKVIDQEKNFHLDMGNEILVHGIIDRIDQLSDGSLGIVDYKSSANQFDIGTFYNGLSPQLVTYLAALKQIAPHDINQLFGAMYLHLQDPKLDLVTFKQIDNTLVESIYKALTYKGIFSEVEKEHLSTGAYQTKNALYSNDELETLLNYNKYLYLKAAKHIKKGHFLINPYTSDGKTVQGDQLKAITRFEADLDMAQARRLVTLPAKEKKECFLTLMRKESHL</sequence>
<gene>
    <name evidence="1" type="primary">rexB</name>
    <name type="ordered locus">MGAS2096_Spy0657</name>
</gene>
<evidence type="ECO:0000255" key="1">
    <source>
        <dbReference type="HAMAP-Rule" id="MF_01453"/>
    </source>
</evidence>
<proteinExistence type="inferred from homology"/>
<feature type="chain" id="PRO_0000379402" description="ATP-dependent helicase/deoxyribonuclease subunit B">
    <location>
        <begin position="1"/>
        <end position="1071"/>
    </location>
</feature>
<reference key="1">
    <citation type="journal article" date="2006" name="Proc. Natl. Acad. Sci. U.S.A.">
        <title>Molecular genetic anatomy of inter- and intraserotype variation in the human bacterial pathogen group A Streptococcus.</title>
        <authorList>
            <person name="Beres S.B."/>
            <person name="Richter E.W."/>
            <person name="Nagiec M.J."/>
            <person name="Sumby P."/>
            <person name="Porcella S.F."/>
            <person name="DeLeo F.R."/>
            <person name="Musser J.M."/>
        </authorList>
    </citation>
    <scope>NUCLEOTIDE SEQUENCE [LARGE SCALE GENOMIC DNA]</scope>
    <source>
        <strain>MGAS2096</strain>
    </source>
</reference>
<dbReference type="EC" id="3.1.-.-" evidence="1"/>
<dbReference type="EMBL" id="CP000261">
    <property type="protein sequence ID" value="ABF35709.1"/>
    <property type="molecule type" value="Genomic_DNA"/>
</dbReference>
<dbReference type="SMR" id="Q1JCJ9"/>
<dbReference type="KEGG" id="spj:MGAS2096_Spy0657"/>
<dbReference type="HOGENOM" id="CLU_007838_1_0_9"/>
<dbReference type="GO" id="GO:0008409">
    <property type="term" value="F:5'-3' exonuclease activity"/>
    <property type="evidence" value="ECO:0007669"/>
    <property type="project" value="UniProtKB-UniRule"/>
</dbReference>
<dbReference type="GO" id="GO:0005524">
    <property type="term" value="F:ATP binding"/>
    <property type="evidence" value="ECO:0007669"/>
    <property type="project" value="UniProtKB-UniRule"/>
</dbReference>
<dbReference type="GO" id="GO:0003690">
    <property type="term" value="F:double-stranded DNA binding"/>
    <property type="evidence" value="ECO:0007669"/>
    <property type="project" value="UniProtKB-UniRule"/>
</dbReference>
<dbReference type="GO" id="GO:0004386">
    <property type="term" value="F:helicase activity"/>
    <property type="evidence" value="ECO:0007669"/>
    <property type="project" value="UniProtKB-KW"/>
</dbReference>
<dbReference type="GO" id="GO:0016817">
    <property type="term" value="F:hydrolase activity, acting on acid anhydrides"/>
    <property type="evidence" value="ECO:0007669"/>
    <property type="project" value="InterPro"/>
</dbReference>
<dbReference type="GO" id="GO:0000724">
    <property type="term" value="P:double-strand break repair via homologous recombination"/>
    <property type="evidence" value="ECO:0007669"/>
    <property type="project" value="UniProtKB-UniRule"/>
</dbReference>
<dbReference type="Gene3D" id="3.90.320.10">
    <property type="match status" value="1"/>
</dbReference>
<dbReference type="Gene3D" id="3.40.50.300">
    <property type="entry name" value="P-loop containing nucleotide triphosphate hydrolases"/>
    <property type="match status" value="3"/>
</dbReference>
<dbReference type="HAMAP" id="MF_01453">
    <property type="entry name" value="AddB_type2"/>
    <property type="match status" value="1"/>
</dbReference>
<dbReference type="InterPro" id="IPR049035">
    <property type="entry name" value="ADDB_N"/>
</dbReference>
<dbReference type="InterPro" id="IPR014141">
    <property type="entry name" value="DNA_helicase_suRexB"/>
</dbReference>
<dbReference type="InterPro" id="IPR027417">
    <property type="entry name" value="P-loop_NTPase"/>
</dbReference>
<dbReference type="InterPro" id="IPR011604">
    <property type="entry name" value="PDDEXK-like_dom_sf"/>
</dbReference>
<dbReference type="InterPro" id="IPR038726">
    <property type="entry name" value="PDDEXK_AddAB-type"/>
</dbReference>
<dbReference type="InterPro" id="IPR011335">
    <property type="entry name" value="Restrct_endonuc-II-like"/>
</dbReference>
<dbReference type="NCBIfam" id="TIGR02774">
    <property type="entry name" value="rexB_recomb"/>
    <property type="match status" value="1"/>
</dbReference>
<dbReference type="PANTHER" id="PTHR30591">
    <property type="entry name" value="RECBCD ENZYME SUBUNIT RECC"/>
    <property type="match status" value="1"/>
</dbReference>
<dbReference type="PANTHER" id="PTHR30591:SF1">
    <property type="entry name" value="RECBCD ENZYME SUBUNIT RECC"/>
    <property type="match status" value="1"/>
</dbReference>
<dbReference type="Pfam" id="PF21445">
    <property type="entry name" value="ADDB_N"/>
    <property type="match status" value="1"/>
</dbReference>
<dbReference type="Pfam" id="PF12705">
    <property type="entry name" value="PDDEXK_1"/>
    <property type="match status" value="1"/>
</dbReference>
<dbReference type="SUPFAM" id="SSF52540">
    <property type="entry name" value="P-loop containing nucleoside triphosphate hydrolases"/>
    <property type="match status" value="1"/>
</dbReference>
<dbReference type="SUPFAM" id="SSF52980">
    <property type="entry name" value="Restriction endonuclease-like"/>
    <property type="match status" value="1"/>
</dbReference>